<evidence type="ECO:0000255" key="1">
    <source>
        <dbReference type="HAMAP-Rule" id="MF_00983"/>
    </source>
</evidence>
<dbReference type="EC" id="5.6.2.4" evidence="1"/>
<dbReference type="EMBL" id="AE017197">
    <property type="protein sequence ID" value="AAU03998.1"/>
    <property type="molecule type" value="Genomic_DNA"/>
</dbReference>
<dbReference type="RefSeq" id="WP_011190979.1">
    <property type="nucleotide sequence ID" value="NC_006142.1"/>
</dbReference>
<dbReference type="SMR" id="Q68WJ4"/>
<dbReference type="KEGG" id="rty:RT0529"/>
<dbReference type="eggNOG" id="COG1198">
    <property type="taxonomic scope" value="Bacteria"/>
</dbReference>
<dbReference type="HOGENOM" id="CLU_013353_4_1_5"/>
<dbReference type="OrthoDB" id="9759544at2"/>
<dbReference type="Proteomes" id="UP000000604">
    <property type="component" value="Chromosome"/>
</dbReference>
<dbReference type="GO" id="GO:1990077">
    <property type="term" value="C:primosome complex"/>
    <property type="evidence" value="ECO:0007669"/>
    <property type="project" value="UniProtKB-UniRule"/>
</dbReference>
<dbReference type="GO" id="GO:0043138">
    <property type="term" value="F:3'-5' DNA helicase activity"/>
    <property type="evidence" value="ECO:0007669"/>
    <property type="project" value="TreeGrafter"/>
</dbReference>
<dbReference type="GO" id="GO:0005524">
    <property type="term" value="F:ATP binding"/>
    <property type="evidence" value="ECO:0007669"/>
    <property type="project" value="UniProtKB-UniRule"/>
</dbReference>
<dbReference type="GO" id="GO:0016887">
    <property type="term" value="F:ATP hydrolysis activity"/>
    <property type="evidence" value="ECO:0007669"/>
    <property type="project" value="RHEA"/>
</dbReference>
<dbReference type="GO" id="GO:0003677">
    <property type="term" value="F:DNA binding"/>
    <property type="evidence" value="ECO:0007669"/>
    <property type="project" value="UniProtKB-UniRule"/>
</dbReference>
<dbReference type="GO" id="GO:0008270">
    <property type="term" value="F:zinc ion binding"/>
    <property type="evidence" value="ECO:0007669"/>
    <property type="project" value="UniProtKB-UniRule"/>
</dbReference>
<dbReference type="GO" id="GO:0006310">
    <property type="term" value="P:DNA recombination"/>
    <property type="evidence" value="ECO:0007669"/>
    <property type="project" value="InterPro"/>
</dbReference>
<dbReference type="GO" id="GO:0006270">
    <property type="term" value="P:DNA replication initiation"/>
    <property type="evidence" value="ECO:0007669"/>
    <property type="project" value="TreeGrafter"/>
</dbReference>
<dbReference type="GO" id="GO:0006269">
    <property type="term" value="P:DNA replication, synthesis of primer"/>
    <property type="evidence" value="ECO:0007669"/>
    <property type="project" value="UniProtKB-KW"/>
</dbReference>
<dbReference type="GO" id="GO:0006302">
    <property type="term" value="P:double-strand break repair"/>
    <property type="evidence" value="ECO:0007669"/>
    <property type="project" value="InterPro"/>
</dbReference>
<dbReference type="CDD" id="cd17929">
    <property type="entry name" value="DEXHc_priA"/>
    <property type="match status" value="1"/>
</dbReference>
<dbReference type="CDD" id="cd18804">
    <property type="entry name" value="SF2_C_priA"/>
    <property type="match status" value="1"/>
</dbReference>
<dbReference type="FunFam" id="3.40.50.300:FF:000489">
    <property type="entry name" value="Primosome assembly protein PriA"/>
    <property type="match status" value="1"/>
</dbReference>
<dbReference type="Gene3D" id="3.40.50.300">
    <property type="entry name" value="P-loop containing nucleotide triphosphate hydrolases"/>
    <property type="match status" value="2"/>
</dbReference>
<dbReference type="Gene3D" id="3.40.1440.60">
    <property type="entry name" value="PriA, 3(prime) DNA-binding domain"/>
    <property type="match status" value="1"/>
</dbReference>
<dbReference type="HAMAP" id="MF_00983">
    <property type="entry name" value="PriA"/>
    <property type="match status" value="1"/>
</dbReference>
<dbReference type="InterPro" id="IPR011545">
    <property type="entry name" value="DEAD/DEAH_box_helicase_dom"/>
</dbReference>
<dbReference type="InterPro" id="IPR014001">
    <property type="entry name" value="Helicase_ATP-bd"/>
</dbReference>
<dbReference type="InterPro" id="IPR001650">
    <property type="entry name" value="Helicase_C-like"/>
</dbReference>
<dbReference type="InterPro" id="IPR027417">
    <property type="entry name" value="P-loop_NTPase"/>
</dbReference>
<dbReference type="InterPro" id="IPR005259">
    <property type="entry name" value="PriA"/>
</dbReference>
<dbReference type="InterPro" id="IPR041222">
    <property type="entry name" value="PriA_3primeBD"/>
</dbReference>
<dbReference type="InterPro" id="IPR042115">
    <property type="entry name" value="PriA_3primeBD_sf"/>
</dbReference>
<dbReference type="InterPro" id="IPR041236">
    <property type="entry name" value="PriA_C"/>
</dbReference>
<dbReference type="InterPro" id="IPR040498">
    <property type="entry name" value="PriA_CRR"/>
</dbReference>
<dbReference type="InterPro" id="IPR050880">
    <property type="entry name" value="PriA_helicase"/>
</dbReference>
<dbReference type="NCBIfam" id="TIGR00595">
    <property type="entry name" value="priA"/>
    <property type="match status" value="1"/>
</dbReference>
<dbReference type="NCBIfam" id="NF004072">
    <property type="entry name" value="PRK05580.2-4"/>
    <property type="match status" value="1"/>
</dbReference>
<dbReference type="PANTHER" id="PTHR30580">
    <property type="entry name" value="PRIMOSOMAL PROTEIN N"/>
    <property type="match status" value="1"/>
</dbReference>
<dbReference type="PANTHER" id="PTHR30580:SF0">
    <property type="entry name" value="PRIMOSOMAL PROTEIN N"/>
    <property type="match status" value="1"/>
</dbReference>
<dbReference type="Pfam" id="PF00270">
    <property type="entry name" value="DEAD"/>
    <property type="match status" value="1"/>
</dbReference>
<dbReference type="Pfam" id="PF00271">
    <property type="entry name" value="Helicase_C"/>
    <property type="match status" value="1"/>
</dbReference>
<dbReference type="Pfam" id="PF17764">
    <property type="entry name" value="PriA_3primeBD"/>
    <property type="match status" value="1"/>
</dbReference>
<dbReference type="Pfam" id="PF18074">
    <property type="entry name" value="PriA_C"/>
    <property type="match status" value="1"/>
</dbReference>
<dbReference type="Pfam" id="PF18319">
    <property type="entry name" value="Zn_ribbon_PriA"/>
    <property type="match status" value="1"/>
</dbReference>
<dbReference type="SMART" id="SM00487">
    <property type="entry name" value="DEXDc"/>
    <property type="match status" value="1"/>
</dbReference>
<dbReference type="SMART" id="SM00490">
    <property type="entry name" value="HELICc"/>
    <property type="match status" value="1"/>
</dbReference>
<dbReference type="SUPFAM" id="SSF52540">
    <property type="entry name" value="P-loop containing nucleoside triphosphate hydrolases"/>
    <property type="match status" value="2"/>
</dbReference>
<dbReference type="PROSITE" id="PS51192">
    <property type="entry name" value="HELICASE_ATP_BIND_1"/>
    <property type="match status" value="1"/>
</dbReference>
<dbReference type="PROSITE" id="PS51194">
    <property type="entry name" value="HELICASE_CTER"/>
    <property type="match status" value="1"/>
</dbReference>
<accession>Q68WJ4</accession>
<organism>
    <name type="scientific">Rickettsia typhi (strain ATCC VR-144 / Wilmington)</name>
    <dbReference type="NCBI Taxonomy" id="257363"/>
    <lineage>
        <taxon>Bacteria</taxon>
        <taxon>Pseudomonadati</taxon>
        <taxon>Pseudomonadota</taxon>
        <taxon>Alphaproteobacteria</taxon>
        <taxon>Rickettsiales</taxon>
        <taxon>Rickettsiaceae</taxon>
        <taxon>Rickettsieae</taxon>
        <taxon>Rickettsia</taxon>
        <taxon>typhus group</taxon>
    </lineage>
</organism>
<name>PRIA_RICTY</name>
<gene>
    <name evidence="1" type="primary">priA</name>
    <name type="ordered locus">RT0529</name>
</gene>
<feature type="chain" id="PRO_0000102133" description="Replication restart protein PriA">
    <location>
        <begin position="1"/>
        <end position="648"/>
    </location>
</feature>
<feature type="domain" description="Helicase ATP-binding" evidence="1">
    <location>
        <begin position="131"/>
        <end position="297"/>
    </location>
</feature>
<feature type="domain" description="Helicase C-terminal" evidence="1">
    <location>
        <begin position="393"/>
        <end position="548"/>
    </location>
</feature>
<feature type="short sequence motif" description="DEAH box" evidence="1">
    <location>
        <begin position="240"/>
        <end position="243"/>
    </location>
</feature>
<feature type="binding site" evidence="1">
    <location>
        <begin position="144"/>
        <end position="151"/>
    </location>
    <ligand>
        <name>ATP</name>
        <dbReference type="ChEBI" id="CHEBI:30616"/>
    </ligand>
</feature>
<feature type="binding site" evidence="1">
    <location>
        <position position="358"/>
    </location>
    <ligand>
        <name>Zn(2+)</name>
        <dbReference type="ChEBI" id="CHEBI:29105"/>
        <label>1</label>
    </ligand>
</feature>
<feature type="binding site" evidence="1">
    <location>
        <position position="361"/>
    </location>
    <ligand>
        <name>Zn(2+)</name>
        <dbReference type="ChEBI" id="CHEBI:29105"/>
        <label>1</label>
    </ligand>
</feature>
<feature type="binding site" evidence="1">
    <location>
        <position position="367"/>
    </location>
    <ligand>
        <name>Zn(2+)</name>
        <dbReference type="ChEBI" id="CHEBI:29105"/>
        <label>2</label>
    </ligand>
</feature>
<feature type="binding site" evidence="1">
    <location>
        <position position="370"/>
    </location>
    <ligand>
        <name>Zn(2+)</name>
        <dbReference type="ChEBI" id="CHEBI:29105"/>
        <label>2</label>
    </ligand>
</feature>
<feature type="binding site" evidence="1">
    <location>
        <position position="385"/>
    </location>
    <ligand>
        <name>Zn(2+)</name>
        <dbReference type="ChEBI" id="CHEBI:29105"/>
        <label>2</label>
    </ligand>
</feature>
<feature type="binding site" evidence="1">
    <location>
        <position position="388"/>
    </location>
    <ligand>
        <name>Zn(2+)</name>
        <dbReference type="ChEBI" id="CHEBI:29105"/>
        <label>2</label>
    </ligand>
</feature>
<feature type="binding site" evidence="1">
    <location>
        <position position="398"/>
    </location>
    <ligand>
        <name>Zn(2+)</name>
        <dbReference type="ChEBI" id="CHEBI:29105"/>
        <label>1</label>
    </ligand>
</feature>
<feature type="binding site" evidence="1">
    <location>
        <position position="401"/>
    </location>
    <ligand>
        <name>Zn(2+)</name>
        <dbReference type="ChEBI" id="CHEBI:29105"/>
        <label>1</label>
    </ligand>
</feature>
<sequence length="648" mass="73424">MRIAKILLPVSKLFPLDYLITEDLELNIGDLVVVHFRNQELTGIVWELATNSEAKKIKTIKAKVPLNLNISLEVLALIKWMSSYYMSELGSIAKLVLPINIAEKPIKIKEQQVKNYFVLPQLSEEQKQAVTIFNESNKPTLIKGVTGSGKTEIYFHIIADHLMKGQQVLIMLPEIALSRQIINRFIDRFGFEPIIWNSSVTKAQKKMILRGILSDKVKVVIGARSSLFLPFHNLGLIVIDEEHDDSYKQDDNILYNARDTAIVRGVFDKAKIVLCSATPSLETIYNIKTHKYQLVTLVNRYKNIDLPNIEIIDMTKEKLPKNSYLSKILIDAIKGNLENKKQVLLFLNRRGYAPLMLCKACGHRFTCRFCSAWMVLHKATKTLECHHCGYQSKIFSSCPECLEDETLTICGPGIERIEEEAMLLFPKSKIAVISKDHAKTPAKIAQLLHQMENLEIDILIGTQIITKGYHFPNLTLVGVIDADLGSNNAELRASERTFQLLHQVGGRAGRGDSKGVVYLQSYYPDNIIFSYVKVGDEDSFFTNELEIRKAANMPPFSKTASLILSGFSESKILDIAKNIVQIAPKANVKILGPARALMSKLAGKYRYRILIIADKKFNLQQYLKFWLSLIKIPSYCQIKIDIDPKTFY</sequence>
<reference key="1">
    <citation type="journal article" date="2004" name="J. Bacteriol.">
        <title>Complete genome sequence of Rickettsia typhi and comparison with sequences of other Rickettsiae.</title>
        <authorList>
            <person name="McLeod M.P."/>
            <person name="Qin X."/>
            <person name="Karpathy S.E."/>
            <person name="Gioia J."/>
            <person name="Highlander S.K."/>
            <person name="Fox G.E."/>
            <person name="McNeill T.Z."/>
            <person name="Jiang H."/>
            <person name="Muzny D."/>
            <person name="Jacob L.S."/>
            <person name="Hawes A.C."/>
            <person name="Sodergren E."/>
            <person name="Gill R."/>
            <person name="Hume J."/>
            <person name="Morgan M."/>
            <person name="Fan G."/>
            <person name="Amin A.G."/>
            <person name="Gibbs R.A."/>
            <person name="Hong C."/>
            <person name="Yu X.-J."/>
            <person name="Walker D.H."/>
            <person name="Weinstock G.M."/>
        </authorList>
    </citation>
    <scope>NUCLEOTIDE SEQUENCE [LARGE SCALE GENOMIC DNA]</scope>
    <source>
        <strain>ATCC VR-144 / Wilmington</strain>
    </source>
</reference>
<protein>
    <recommendedName>
        <fullName evidence="1">Replication restart protein PriA</fullName>
    </recommendedName>
    <alternativeName>
        <fullName evidence="1">ATP-dependent DNA helicase PriA</fullName>
        <ecNumber evidence="1">5.6.2.4</ecNumber>
    </alternativeName>
    <alternativeName>
        <fullName evidence="1">DNA 3'-5' helicase PriA</fullName>
    </alternativeName>
</protein>
<keyword id="KW-0067">ATP-binding</keyword>
<keyword id="KW-0235">DNA replication</keyword>
<keyword id="KW-0238">DNA-binding</keyword>
<keyword id="KW-0347">Helicase</keyword>
<keyword id="KW-0378">Hydrolase</keyword>
<keyword id="KW-0413">Isomerase</keyword>
<keyword id="KW-0479">Metal-binding</keyword>
<keyword id="KW-0547">Nucleotide-binding</keyword>
<keyword id="KW-0639">Primosome</keyword>
<keyword id="KW-0862">Zinc</keyword>
<proteinExistence type="inferred from homology"/>
<comment type="function">
    <text evidence="1">Initiates the restart of stalled replication forks, which reloads the replicative helicase on sites other than the origin of replication. Recognizes and binds to abandoned replication forks and remodels them to uncover a helicase loading site. Promotes assembly of the primosome at these replication forks.</text>
</comment>
<comment type="catalytic activity">
    <reaction evidence="1">
        <text>Couples ATP hydrolysis with the unwinding of duplex DNA by translocating in the 3'-5' direction.</text>
        <dbReference type="EC" id="5.6.2.4"/>
    </reaction>
</comment>
<comment type="catalytic activity">
    <reaction evidence="1">
        <text>ATP + H2O = ADP + phosphate + H(+)</text>
        <dbReference type="Rhea" id="RHEA:13065"/>
        <dbReference type="ChEBI" id="CHEBI:15377"/>
        <dbReference type="ChEBI" id="CHEBI:15378"/>
        <dbReference type="ChEBI" id="CHEBI:30616"/>
        <dbReference type="ChEBI" id="CHEBI:43474"/>
        <dbReference type="ChEBI" id="CHEBI:456216"/>
        <dbReference type="EC" id="5.6.2.4"/>
    </reaction>
</comment>
<comment type="cofactor">
    <cofactor evidence="1">
        <name>Zn(2+)</name>
        <dbReference type="ChEBI" id="CHEBI:29105"/>
    </cofactor>
    <text evidence="1">Binds 2 zinc ions per subunit.</text>
</comment>
<comment type="subunit">
    <text evidence="1">Component of the replication restart primosome.</text>
</comment>
<comment type="similarity">
    <text evidence="1">Belongs to the helicase family. PriA subfamily.</text>
</comment>